<sequence>MKVAVLGAAGGIGQALSLLLKTQLPAGTELALYDVAPVVPGVAVDLSHIPTDVKVEGFGKDDLAKALTGSDIVLIPAGVPRKPGMDRSDLFNINAGIVRNLVDSVADNCPEACLCIITNPVNTTVAIAAEALKAKGVYNKNKLFGVTTLDVIRAETFVGNLRDLNPANVHVPVIGGHSGTTILPLLSQVEGVEFTDEEVASLTTRIQNAGTEVVEAKAGGGSATLSMGQAAARFCLSLVSAMRGENVVEYTYVETNSDDAQFFSHPVRLGKNGVEEILPYGELSDFEQKAKESMLEGLRGDIKLGVEFVNN</sequence>
<protein>
    <recommendedName>
        <fullName evidence="1">Malate dehydrogenase</fullName>
        <ecNumber evidence="1">1.1.1.37</ecNumber>
    </recommendedName>
</protein>
<feature type="chain" id="PRO_0000294297" description="Malate dehydrogenase">
    <location>
        <begin position="1"/>
        <end position="311"/>
    </location>
</feature>
<feature type="active site" description="Proton acceptor" evidence="1">
    <location>
        <position position="177"/>
    </location>
</feature>
<feature type="binding site" evidence="1">
    <location>
        <begin position="7"/>
        <end position="13"/>
    </location>
    <ligand>
        <name>NAD(+)</name>
        <dbReference type="ChEBI" id="CHEBI:57540"/>
    </ligand>
</feature>
<feature type="binding site" evidence="1">
    <location>
        <position position="34"/>
    </location>
    <ligand>
        <name>NAD(+)</name>
        <dbReference type="ChEBI" id="CHEBI:57540"/>
    </ligand>
</feature>
<feature type="binding site" evidence="1">
    <location>
        <position position="81"/>
    </location>
    <ligand>
        <name>substrate</name>
    </ligand>
</feature>
<feature type="binding site" evidence="1">
    <location>
        <position position="87"/>
    </location>
    <ligand>
        <name>substrate</name>
    </ligand>
</feature>
<feature type="binding site" evidence="1">
    <location>
        <position position="94"/>
    </location>
    <ligand>
        <name>NAD(+)</name>
        <dbReference type="ChEBI" id="CHEBI:57540"/>
    </ligand>
</feature>
<feature type="binding site" evidence="1">
    <location>
        <begin position="117"/>
        <end position="119"/>
    </location>
    <ligand>
        <name>NAD(+)</name>
        <dbReference type="ChEBI" id="CHEBI:57540"/>
    </ligand>
</feature>
<feature type="binding site" evidence="1">
    <location>
        <position position="119"/>
    </location>
    <ligand>
        <name>substrate</name>
    </ligand>
</feature>
<feature type="binding site" evidence="1">
    <location>
        <position position="153"/>
    </location>
    <ligand>
        <name>substrate</name>
    </ligand>
</feature>
<feature type="binding site" evidence="1">
    <location>
        <position position="227"/>
    </location>
    <ligand>
        <name>NAD(+)</name>
        <dbReference type="ChEBI" id="CHEBI:57540"/>
    </ligand>
</feature>
<comment type="function">
    <text evidence="1">Catalyzes the reversible oxidation of malate to oxaloacetate.</text>
</comment>
<comment type="catalytic activity">
    <reaction evidence="1">
        <text>(S)-malate + NAD(+) = oxaloacetate + NADH + H(+)</text>
        <dbReference type="Rhea" id="RHEA:21432"/>
        <dbReference type="ChEBI" id="CHEBI:15378"/>
        <dbReference type="ChEBI" id="CHEBI:15589"/>
        <dbReference type="ChEBI" id="CHEBI:16452"/>
        <dbReference type="ChEBI" id="CHEBI:57540"/>
        <dbReference type="ChEBI" id="CHEBI:57945"/>
        <dbReference type="EC" id="1.1.1.37"/>
    </reaction>
</comment>
<comment type="subunit">
    <text evidence="1">Homodimer.</text>
</comment>
<comment type="similarity">
    <text evidence="1">Belongs to the LDH/MDH superfamily. MDH type 1 family.</text>
</comment>
<gene>
    <name evidence="1" type="primary">mdh</name>
    <name type="ordered locus">Patl_0539</name>
</gene>
<reference key="1">
    <citation type="submission" date="2006-06" db="EMBL/GenBank/DDBJ databases">
        <title>Complete sequence of Pseudoalteromonas atlantica T6c.</title>
        <authorList>
            <consortium name="US DOE Joint Genome Institute"/>
            <person name="Copeland A."/>
            <person name="Lucas S."/>
            <person name="Lapidus A."/>
            <person name="Barry K."/>
            <person name="Detter J.C."/>
            <person name="Glavina del Rio T."/>
            <person name="Hammon N."/>
            <person name="Israni S."/>
            <person name="Dalin E."/>
            <person name="Tice H."/>
            <person name="Pitluck S."/>
            <person name="Saunders E."/>
            <person name="Brettin T."/>
            <person name="Bruce D."/>
            <person name="Han C."/>
            <person name="Tapia R."/>
            <person name="Gilna P."/>
            <person name="Schmutz J."/>
            <person name="Larimer F."/>
            <person name="Land M."/>
            <person name="Hauser L."/>
            <person name="Kyrpides N."/>
            <person name="Kim E."/>
            <person name="Karls A.C."/>
            <person name="Bartlett D."/>
            <person name="Higgins B.P."/>
            <person name="Richardson P."/>
        </authorList>
    </citation>
    <scope>NUCLEOTIDE SEQUENCE [LARGE SCALE GENOMIC DNA]</scope>
    <source>
        <strain>T6c / ATCC BAA-1087</strain>
    </source>
</reference>
<name>MDH_PSEA6</name>
<dbReference type="EC" id="1.1.1.37" evidence="1"/>
<dbReference type="EMBL" id="CP000388">
    <property type="protein sequence ID" value="ABG39068.1"/>
    <property type="molecule type" value="Genomic_DNA"/>
</dbReference>
<dbReference type="RefSeq" id="WP_006992742.1">
    <property type="nucleotide sequence ID" value="NC_008228.1"/>
</dbReference>
<dbReference type="SMR" id="Q15YH0"/>
<dbReference type="STRING" id="342610.Patl_0539"/>
<dbReference type="KEGG" id="pat:Patl_0539"/>
<dbReference type="eggNOG" id="COG0039">
    <property type="taxonomic scope" value="Bacteria"/>
</dbReference>
<dbReference type="HOGENOM" id="CLU_047181_1_0_6"/>
<dbReference type="OrthoDB" id="9802969at2"/>
<dbReference type="Proteomes" id="UP000001981">
    <property type="component" value="Chromosome"/>
</dbReference>
<dbReference type="GO" id="GO:0005737">
    <property type="term" value="C:cytoplasm"/>
    <property type="evidence" value="ECO:0007669"/>
    <property type="project" value="TreeGrafter"/>
</dbReference>
<dbReference type="GO" id="GO:0030060">
    <property type="term" value="F:L-malate dehydrogenase (NAD+) activity"/>
    <property type="evidence" value="ECO:0007669"/>
    <property type="project" value="UniProtKB-UniRule"/>
</dbReference>
<dbReference type="GO" id="GO:0006108">
    <property type="term" value="P:malate metabolic process"/>
    <property type="evidence" value="ECO:0007669"/>
    <property type="project" value="InterPro"/>
</dbReference>
<dbReference type="GO" id="GO:0006099">
    <property type="term" value="P:tricarboxylic acid cycle"/>
    <property type="evidence" value="ECO:0007669"/>
    <property type="project" value="UniProtKB-UniRule"/>
</dbReference>
<dbReference type="CDD" id="cd01337">
    <property type="entry name" value="MDH_glyoxysomal_mitochondrial"/>
    <property type="match status" value="1"/>
</dbReference>
<dbReference type="FunFam" id="3.40.50.720:FF:000017">
    <property type="entry name" value="Malate dehydrogenase"/>
    <property type="match status" value="1"/>
</dbReference>
<dbReference type="FunFam" id="3.90.110.10:FF:000001">
    <property type="entry name" value="Malate dehydrogenase"/>
    <property type="match status" value="1"/>
</dbReference>
<dbReference type="Gene3D" id="3.90.110.10">
    <property type="entry name" value="Lactate dehydrogenase/glycoside hydrolase, family 4, C-terminal"/>
    <property type="match status" value="1"/>
</dbReference>
<dbReference type="Gene3D" id="3.40.50.720">
    <property type="entry name" value="NAD(P)-binding Rossmann-like Domain"/>
    <property type="match status" value="1"/>
</dbReference>
<dbReference type="HAMAP" id="MF_01516">
    <property type="entry name" value="Malate_dehydrog_1"/>
    <property type="match status" value="1"/>
</dbReference>
<dbReference type="InterPro" id="IPR001557">
    <property type="entry name" value="L-lactate/malate_DH"/>
</dbReference>
<dbReference type="InterPro" id="IPR022383">
    <property type="entry name" value="Lactate/malate_DH_C"/>
</dbReference>
<dbReference type="InterPro" id="IPR001236">
    <property type="entry name" value="Lactate/malate_DH_N"/>
</dbReference>
<dbReference type="InterPro" id="IPR015955">
    <property type="entry name" value="Lactate_DH/Glyco_Ohase_4_C"/>
</dbReference>
<dbReference type="InterPro" id="IPR001252">
    <property type="entry name" value="Malate_DH_AS"/>
</dbReference>
<dbReference type="InterPro" id="IPR010097">
    <property type="entry name" value="Malate_DH_type1"/>
</dbReference>
<dbReference type="InterPro" id="IPR023958">
    <property type="entry name" value="Malate_DH_type1_bac"/>
</dbReference>
<dbReference type="InterPro" id="IPR036291">
    <property type="entry name" value="NAD(P)-bd_dom_sf"/>
</dbReference>
<dbReference type="NCBIfam" id="TIGR01772">
    <property type="entry name" value="MDH_euk_gproteo"/>
    <property type="match status" value="1"/>
</dbReference>
<dbReference type="PANTHER" id="PTHR11540">
    <property type="entry name" value="MALATE AND LACTATE DEHYDROGENASE"/>
    <property type="match status" value="1"/>
</dbReference>
<dbReference type="PANTHER" id="PTHR11540:SF16">
    <property type="entry name" value="MALATE DEHYDROGENASE, MITOCHONDRIAL"/>
    <property type="match status" value="1"/>
</dbReference>
<dbReference type="Pfam" id="PF02866">
    <property type="entry name" value="Ldh_1_C"/>
    <property type="match status" value="1"/>
</dbReference>
<dbReference type="Pfam" id="PF00056">
    <property type="entry name" value="Ldh_1_N"/>
    <property type="match status" value="1"/>
</dbReference>
<dbReference type="PIRSF" id="PIRSF000102">
    <property type="entry name" value="Lac_mal_DH"/>
    <property type="match status" value="1"/>
</dbReference>
<dbReference type="SUPFAM" id="SSF56327">
    <property type="entry name" value="LDH C-terminal domain-like"/>
    <property type="match status" value="1"/>
</dbReference>
<dbReference type="SUPFAM" id="SSF51735">
    <property type="entry name" value="NAD(P)-binding Rossmann-fold domains"/>
    <property type="match status" value="1"/>
</dbReference>
<dbReference type="PROSITE" id="PS00068">
    <property type="entry name" value="MDH"/>
    <property type="match status" value="1"/>
</dbReference>
<proteinExistence type="inferred from homology"/>
<keyword id="KW-0520">NAD</keyword>
<keyword id="KW-0560">Oxidoreductase</keyword>
<keyword id="KW-0816">Tricarboxylic acid cycle</keyword>
<organism>
    <name type="scientific">Pseudoalteromonas atlantica (strain T6c / ATCC BAA-1087)</name>
    <dbReference type="NCBI Taxonomy" id="3042615"/>
    <lineage>
        <taxon>Bacteria</taxon>
        <taxon>Pseudomonadati</taxon>
        <taxon>Pseudomonadota</taxon>
        <taxon>Gammaproteobacteria</taxon>
        <taxon>Alteromonadales</taxon>
        <taxon>Alteromonadaceae</taxon>
        <taxon>Paraglaciecola</taxon>
    </lineage>
</organism>
<accession>Q15YH0</accession>
<evidence type="ECO:0000255" key="1">
    <source>
        <dbReference type="HAMAP-Rule" id="MF_01516"/>
    </source>
</evidence>